<feature type="chain" id="PRO_0000070348" description="Macrodomain Ter protein">
    <location>
        <begin position="1"/>
        <end position="150"/>
    </location>
</feature>
<comment type="function">
    <text evidence="1">Required for spatial organization of the terminus region of the chromosome (Ter macrodomain) during the cell cycle. Prevents early segregation of duplicated Ter macrodomains during cell division. Binds specifically to matS, which is a 13 bp signature motif repeated within the Ter macrodomain.</text>
</comment>
<comment type="subunit">
    <text evidence="1">Homodimer.</text>
</comment>
<comment type="subcellular location">
    <subcellularLocation>
        <location evidence="1">Cytoplasm</location>
    </subcellularLocation>
</comment>
<comment type="similarity">
    <text evidence="1">Belongs to the MatP family.</text>
</comment>
<accession>P0A8N1</accession>
<accession>P45569</accession>
<accession>P75868</accession>
<accession>Q83RX3</accession>
<keyword id="KW-0131">Cell cycle</keyword>
<keyword id="KW-0132">Cell division</keyword>
<keyword id="KW-0963">Cytoplasm</keyword>
<keyword id="KW-0238">DNA-binding</keyword>
<keyword id="KW-1185">Reference proteome</keyword>
<proteinExistence type="inferred from homology"/>
<organism>
    <name type="scientific">Escherichia coli O157:H7</name>
    <dbReference type="NCBI Taxonomy" id="83334"/>
    <lineage>
        <taxon>Bacteria</taxon>
        <taxon>Pseudomonadati</taxon>
        <taxon>Pseudomonadota</taxon>
        <taxon>Gammaproteobacteria</taxon>
        <taxon>Enterobacterales</taxon>
        <taxon>Enterobacteriaceae</taxon>
        <taxon>Escherichia</taxon>
    </lineage>
</organism>
<sequence>MKYQQLENLESGWKWKYLVKKHREGELITRYIEASAAQEAVDVLLSLENEPVLVNGWIDKHMNPELVNRMKQTIRARRKRHFNAEHQHTRKKSIDLEFIVWQRLAGLAQRRGKTLSETIVQLIEDAENKEKYANKMSSLKQDLQALLGKE</sequence>
<dbReference type="EMBL" id="AE005174">
    <property type="protein sequence ID" value="AAG55442.1"/>
    <property type="molecule type" value="Genomic_DNA"/>
</dbReference>
<dbReference type="EMBL" id="BA000007">
    <property type="protein sequence ID" value="BAB34463.1"/>
    <property type="molecule type" value="Genomic_DNA"/>
</dbReference>
<dbReference type="PIR" id="F85622">
    <property type="entry name" value="F85622"/>
</dbReference>
<dbReference type="PIR" id="H90758">
    <property type="entry name" value="H90758"/>
</dbReference>
<dbReference type="RefSeq" id="NP_309067.1">
    <property type="nucleotide sequence ID" value="NC_002695.1"/>
</dbReference>
<dbReference type="RefSeq" id="WP_000877161.1">
    <property type="nucleotide sequence ID" value="NZ_VOAI01000006.1"/>
</dbReference>
<dbReference type="SMR" id="P0A8N1"/>
<dbReference type="STRING" id="155864.Z1306"/>
<dbReference type="GeneID" id="916914"/>
<dbReference type="GeneID" id="93776458"/>
<dbReference type="KEGG" id="ece:Z1306"/>
<dbReference type="KEGG" id="ecs:ECs_1040"/>
<dbReference type="PATRIC" id="fig|386585.9.peg.1164"/>
<dbReference type="eggNOG" id="COG3120">
    <property type="taxonomic scope" value="Bacteria"/>
</dbReference>
<dbReference type="HOGENOM" id="CLU_142157_0_0_6"/>
<dbReference type="OMA" id="KYANQMS"/>
<dbReference type="Proteomes" id="UP000000558">
    <property type="component" value="Chromosome"/>
</dbReference>
<dbReference type="Proteomes" id="UP000002519">
    <property type="component" value="Chromosome"/>
</dbReference>
<dbReference type="GO" id="GO:0005737">
    <property type="term" value="C:cytoplasm"/>
    <property type="evidence" value="ECO:0007669"/>
    <property type="project" value="UniProtKB-SubCell"/>
</dbReference>
<dbReference type="GO" id="GO:0043565">
    <property type="term" value="F:sequence-specific DNA binding"/>
    <property type="evidence" value="ECO:0007669"/>
    <property type="project" value="UniProtKB-UniRule"/>
</dbReference>
<dbReference type="GO" id="GO:0051301">
    <property type="term" value="P:cell division"/>
    <property type="evidence" value="ECO:0007669"/>
    <property type="project" value="UniProtKB-UniRule"/>
</dbReference>
<dbReference type="GO" id="GO:0006355">
    <property type="term" value="P:regulation of DNA-templated transcription"/>
    <property type="evidence" value="ECO:0007669"/>
    <property type="project" value="InterPro"/>
</dbReference>
<dbReference type="FunFam" id="1.10.1220.10:FF:000004">
    <property type="entry name" value="Macrodomain Ter protein"/>
    <property type="match status" value="1"/>
</dbReference>
<dbReference type="FunFam" id="1.20.1270.380:FF:000001">
    <property type="entry name" value="Macrodomain Ter protein"/>
    <property type="match status" value="1"/>
</dbReference>
<dbReference type="Gene3D" id="1.20.1270.380">
    <property type="entry name" value="MatP, N-terminal domain"/>
    <property type="match status" value="1"/>
</dbReference>
<dbReference type="Gene3D" id="1.10.1220.10">
    <property type="entry name" value="Met repressor-like"/>
    <property type="match status" value="1"/>
</dbReference>
<dbReference type="HAMAP" id="MF_01073">
    <property type="entry name" value="MatP"/>
    <property type="match status" value="1"/>
</dbReference>
<dbReference type="InterPro" id="IPR013321">
    <property type="entry name" value="Arc_rbn_hlx_hlx"/>
</dbReference>
<dbReference type="InterPro" id="IPR009390">
    <property type="entry name" value="MatP"/>
</dbReference>
<dbReference type="InterPro" id="IPR035375">
    <property type="entry name" value="MatP_C"/>
</dbReference>
<dbReference type="InterPro" id="IPR035087">
    <property type="entry name" value="MatP_N"/>
</dbReference>
<dbReference type="InterPro" id="IPR038339">
    <property type="entry name" value="MatP_N_sf"/>
</dbReference>
<dbReference type="NCBIfam" id="NF003471">
    <property type="entry name" value="PRK05097.1"/>
    <property type="match status" value="1"/>
</dbReference>
<dbReference type="Pfam" id="PF06303">
    <property type="entry name" value="MatP"/>
    <property type="match status" value="1"/>
</dbReference>
<dbReference type="Pfam" id="PF17414">
    <property type="entry name" value="MatP_C"/>
    <property type="match status" value="1"/>
</dbReference>
<evidence type="ECO:0000255" key="1">
    <source>
        <dbReference type="HAMAP-Rule" id="MF_01073"/>
    </source>
</evidence>
<name>MATP_ECO57</name>
<reference key="1">
    <citation type="journal article" date="2001" name="Nature">
        <title>Genome sequence of enterohaemorrhagic Escherichia coli O157:H7.</title>
        <authorList>
            <person name="Perna N.T."/>
            <person name="Plunkett G. III"/>
            <person name="Burland V."/>
            <person name="Mau B."/>
            <person name="Glasner J.D."/>
            <person name="Rose D.J."/>
            <person name="Mayhew G.F."/>
            <person name="Evans P.S."/>
            <person name="Gregor J."/>
            <person name="Kirkpatrick H.A."/>
            <person name="Posfai G."/>
            <person name="Hackett J."/>
            <person name="Klink S."/>
            <person name="Boutin A."/>
            <person name="Shao Y."/>
            <person name="Miller L."/>
            <person name="Grotbeck E.J."/>
            <person name="Davis N.W."/>
            <person name="Lim A."/>
            <person name="Dimalanta E.T."/>
            <person name="Potamousis K."/>
            <person name="Apodaca J."/>
            <person name="Anantharaman T.S."/>
            <person name="Lin J."/>
            <person name="Yen G."/>
            <person name="Schwartz D.C."/>
            <person name="Welch R.A."/>
            <person name="Blattner F.R."/>
        </authorList>
    </citation>
    <scope>NUCLEOTIDE SEQUENCE [LARGE SCALE GENOMIC DNA]</scope>
    <source>
        <strain>O157:H7 / EDL933 / ATCC 700927 / EHEC</strain>
    </source>
</reference>
<reference key="2">
    <citation type="journal article" date="2001" name="DNA Res.">
        <title>Complete genome sequence of enterohemorrhagic Escherichia coli O157:H7 and genomic comparison with a laboratory strain K-12.</title>
        <authorList>
            <person name="Hayashi T."/>
            <person name="Makino K."/>
            <person name="Ohnishi M."/>
            <person name="Kurokawa K."/>
            <person name="Ishii K."/>
            <person name="Yokoyama K."/>
            <person name="Han C.-G."/>
            <person name="Ohtsubo E."/>
            <person name="Nakayama K."/>
            <person name="Murata T."/>
            <person name="Tanaka M."/>
            <person name="Tobe T."/>
            <person name="Iida T."/>
            <person name="Takami H."/>
            <person name="Honda T."/>
            <person name="Sasakawa C."/>
            <person name="Ogasawara N."/>
            <person name="Yasunaga T."/>
            <person name="Kuhara S."/>
            <person name="Shiba T."/>
            <person name="Hattori M."/>
            <person name="Shinagawa H."/>
        </authorList>
    </citation>
    <scope>NUCLEOTIDE SEQUENCE [LARGE SCALE GENOMIC DNA]</scope>
    <source>
        <strain>O157:H7 / Sakai / RIMD 0509952 / EHEC</strain>
    </source>
</reference>
<gene>
    <name evidence="1" type="primary">matP</name>
    <name type="ordered locus">Z1306</name>
    <name type="ordered locus">ECs1040</name>
</gene>
<protein>
    <recommendedName>
        <fullName evidence="1">Macrodomain Ter protein</fullName>
    </recommendedName>
</protein>